<feature type="chain" id="PRO_0000061138" description="Cytochrome b">
    <location>
        <begin position="1"/>
        <end position="379"/>
    </location>
</feature>
<feature type="transmembrane region" description="Helical" evidence="2">
    <location>
        <begin position="34"/>
        <end position="54"/>
    </location>
</feature>
<feature type="transmembrane region" description="Helical" evidence="2">
    <location>
        <begin position="78"/>
        <end position="99"/>
    </location>
</feature>
<feature type="transmembrane region" description="Helical" evidence="2">
    <location>
        <begin position="114"/>
        <end position="134"/>
    </location>
</feature>
<feature type="transmembrane region" description="Helical" evidence="2">
    <location>
        <begin position="179"/>
        <end position="199"/>
    </location>
</feature>
<feature type="transmembrane region" description="Helical" evidence="2">
    <location>
        <begin position="227"/>
        <end position="247"/>
    </location>
</feature>
<feature type="transmembrane region" description="Helical" evidence="2">
    <location>
        <begin position="289"/>
        <end position="309"/>
    </location>
</feature>
<feature type="transmembrane region" description="Helical" evidence="2">
    <location>
        <begin position="321"/>
        <end position="341"/>
    </location>
</feature>
<feature type="transmembrane region" description="Helical" evidence="4">
    <location>
        <begin position="349"/>
        <end position="369"/>
    </location>
</feature>
<feature type="binding site" description="axial binding residue" evidence="2">
    <location>
        <position position="84"/>
    </location>
    <ligand>
        <name>heme b</name>
        <dbReference type="ChEBI" id="CHEBI:60344"/>
        <label>b562</label>
    </ligand>
    <ligandPart>
        <name>Fe</name>
        <dbReference type="ChEBI" id="CHEBI:18248"/>
    </ligandPart>
</feature>
<feature type="binding site" description="axial binding residue" evidence="2">
    <location>
        <position position="98"/>
    </location>
    <ligand>
        <name>heme b</name>
        <dbReference type="ChEBI" id="CHEBI:60344"/>
        <label>b566</label>
    </ligand>
    <ligandPart>
        <name>Fe</name>
        <dbReference type="ChEBI" id="CHEBI:18248"/>
    </ligandPart>
</feature>
<feature type="binding site" description="axial binding residue" evidence="2">
    <location>
        <position position="183"/>
    </location>
    <ligand>
        <name>heme b</name>
        <dbReference type="ChEBI" id="CHEBI:60344"/>
        <label>b562</label>
    </ligand>
    <ligandPart>
        <name>Fe</name>
        <dbReference type="ChEBI" id="CHEBI:18248"/>
    </ligandPart>
</feature>
<feature type="binding site" description="axial binding residue" evidence="2">
    <location>
        <position position="197"/>
    </location>
    <ligand>
        <name>heme b</name>
        <dbReference type="ChEBI" id="CHEBI:60344"/>
        <label>b566</label>
    </ligand>
    <ligandPart>
        <name>Fe</name>
        <dbReference type="ChEBI" id="CHEBI:18248"/>
    </ligandPart>
</feature>
<feature type="binding site" evidence="2">
    <location>
        <position position="202"/>
    </location>
    <ligand>
        <name>a ubiquinone</name>
        <dbReference type="ChEBI" id="CHEBI:16389"/>
    </ligand>
</feature>
<proteinExistence type="inferred from homology"/>
<organism>
    <name type="scientific">Lumbricus terrestris</name>
    <name type="common">Common earthworm</name>
    <dbReference type="NCBI Taxonomy" id="6398"/>
    <lineage>
        <taxon>Eukaryota</taxon>
        <taxon>Metazoa</taxon>
        <taxon>Spiralia</taxon>
        <taxon>Lophotrochozoa</taxon>
        <taxon>Annelida</taxon>
        <taxon>Clitellata</taxon>
        <taxon>Oligochaeta</taxon>
        <taxon>Crassiclitellata</taxon>
        <taxon>Lumbricina</taxon>
        <taxon>Lumbricidae</taxon>
        <taxon>Lumbricinae</taxon>
        <taxon>Lumbricus</taxon>
    </lineage>
</organism>
<comment type="function">
    <text evidence="2">Component of the ubiquinol-cytochrome c reductase complex (complex III or cytochrome b-c1 complex) that is part of the mitochondrial respiratory chain. The b-c1 complex mediates electron transfer from ubiquinol to cytochrome c. Contributes to the generation of a proton gradient across the mitochondrial membrane that is then used for ATP synthesis.</text>
</comment>
<comment type="cofactor">
    <cofactor evidence="2">
        <name>heme b</name>
        <dbReference type="ChEBI" id="CHEBI:60344"/>
    </cofactor>
    <text evidence="2">Binds 2 heme b groups non-covalently.</text>
</comment>
<comment type="subunit">
    <text evidence="2">The main subunits of complex b-c1 are: cytochrome b, cytochrome c1 and the Rieske protein.</text>
</comment>
<comment type="subcellular location">
    <subcellularLocation>
        <location evidence="3">Mitochondrion inner membrane</location>
        <topology evidence="3">Multi-pass membrane protein</topology>
    </subcellularLocation>
</comment>
<comment type="miscellaneous">
    <text evidence="1">Heme 1 (or BL or b562) is low-potential and absorbs at about 562 nm, and heme 2 (or BH or b566) is high-potential and absorbs at about 566 nm.</text>
</comment>
<comment type="similarity">
    <text evidence="5 6">Belongs to the cytochrome b family.</text>
</comment>
<comment type="caution">
    <text evidence="2">The full-length protein contains only eight transmembrane helices, not nine as predicted by bioinformatics tools.</text>
</comment>
<evidence type="ECO:0000250" key="1"/>
<evidence type="ECO:0000250" key="2">
    <source>
        <dbReference type="UniProtKB" id="P00157"/>
    </source>
</evidence>
<evidence type="ECO:0000250" key="3">
    <source>
        <dbReference type="UniProtKB" id="P00163"/>
    </source>
</evidence>
<evidence type="ECO:0000255" key="4"/>
<evidence type="ECO:0000255" key="5">
    <source>
        <dbReference type="PROSITE-ProRule" id="PRU00967"/>
    </source>
</evidence>
<evidence type="ECO:0000255" key="6">
    <source>
        <dbReference type="PROSITE-ProRule" id="PRU00968"/>
    </source>
</evidence>
<sequence length="379" mass="42882">MFKPIRTTHPAIKIINSTLIDLPAPNNISIWWNYGSLLGLCLVIQVLTGLFLSMHYVPNIEMAFSSVALISRDVNYGWLLRSIHANGASMFFLFIYLHAGRGLYYGSYNLSETWNIGVILFLLTMATAFMGYVLPWGQMSFWGATVITNLFSAIPYIGKTLVEWIWGGFAVDNATLNRFFAFHFILPFAIMGATILHIMFLHESGSNNPIGLNADSDRIPFHPYYSIKDTLGYTLAISALSLMVLFEPNLFTDPENFLMANPLVTPIHIKPEWYFLWMYAILRSIPNKLGGVMALFAAIVILFIPPLTSVMNKRSLSFYPLNKTMFWGLVASWAILTWIGGRPVEDPFIIIGQVFTSLYFIYFISSPTISKLWDDSIII</sequence>
<accession>Q34945</accession>
<gene>
    <name type="primary">MT-CYB</name>
    <name type="synonym">COB</name>
    <name type="synonym">CYTB</name>
    <name type="synonym">MTCYB</name>
</gene>
<protein>
    <recommendedName>
        <fullName>Cytochrome b</fullName>
    </recommendedName>
    <alternativeName>
        <fullName>Complex III subunit 3</fullName>
    </alternativeName>
    <alternativeName>
        <fullName>Complex III subunit III</fullName>
    </alternativeName>
    <alternativeName>
        <fullName>Cytochrome b-c1 complex subunit 3</fullName>
    </alternativeName>
    <alternativeName>
        <fullName>Ubiquinol-cytochrome-c reductase complex cytochrome b subunit</fullName>
    </alternativeName>
</protein>
<reference key="1">
    <citation type="journal article" date="1995" name="Genetics">
        <title>Complete sequence of the mitochondrial DNA of the annelid worm Lumbricus terrestris.</title>
        <authorList>
            <person name="Boore J.L."/>
            <person name="Brown W.M."/>
        </authorList>
    </citation>
    <scope>NUCLEOTIDE SEQUENCE [GENOMIC DNA]</scope>
</reference>
<dbReference type="EMBL" id="U24570">
    <property type="protein sequence ID" value="AAC46869.1"/>
    <property type="molecule type" value="Genomic_DNA"/>
</dbReference>
<dbReference type="PIR" id="S58990">
    <property type="entry name" value="S58990"/>
</dbReference>
<dbReference type="RefSeq" id="NP_008243.1">
    <property type="nucleotide sequence ID" value="NC_001673.1"/>
</dbReference>
<dbReference type="SMR" id="Q34945"/>
<dbReference type="GeneID" id="807917"/>
<dbReference type="CTD" id="4519"/>
<dbReference type="GO" id="GO:0005743">
    <property type="term" value="C:mitochondrial inner membrane"/>
    <property type="evidence" value="ECO:0007669"/>
    <property type="project" value="UniProtKB-SubCell"/>
</dbReference>
<dbReference type="GO" id="GO:0045275">
    <property type="term" value="C:respiratory chain complex III"/>
    <property type="evidence" value="ECO:0007669"/>
    <property type="project" value="InterPro"/>
</dbReference>
<dbReference type="GO" id="GO:0046872">
    <property type="term" value="F:metal ion binding"/>
    <property type="evidence" value="ECO:0007669"/>
    <property type="project" value="UniProtKB-KW"/>
</dbReference>
<dbReference type="GO" id="GO:0008121">
    <property type="term" value="F:ubiquinol-cytochrome-c reductase activity"/>
    <property type="evidence" value="ECO:0007669"/>
    <property type="project" value="InterPro"/>
</dbReference>
<dbReference type="GO" id="GO:0006122">
    <property type="term" value="P:mitochondrial electron transport, ubiquinol to cytochrome c"/>
    <property type="evidence" value="ECO:0007669"/>
    <property type="project" value="TreeGrafter"/>
</dbReference>
<dbReference type="CDD" id="cd00290">
    <property type="entry name" value="cytochrome_b_C"/>
    <property type="match status" value="1"/>
</dbReference>
<dbReference type="CDD" id="cd00284">
    <property type="entry name" value="Cytochrome_b_N"/>
    <property type="match status" value="1"/>
</dbReference>
<dbReference type="FunFam" id="1.20.810.10:FF:000002">
    <property type="entry name" value="Cytochrome b"/>
    <property type="match status" value="1"/>
</dbReference>
<dbReference type="Gene3D" id="1.20.810.10">
    <property type="entry name" value="Cytochrome Bc1 Complex, Chain C"/>
    <property type="match status" value="1"/>
</dbReference>
<dbReference type="InterPro" id="IPR005798">
    <property type="entry name" value="Cyt_b/b6_C"/>
</dbReference>
<dbReference type="InterPro" id="IPR036150">
    <property type="entry name" value="Cyt_b/b6_C_sf"/>
</dbReference>
<dbReference type="InterPro" id="IPR005797">
    <property type="entry name" value="Cyt_b/b6_N"/>
</dbReference>
<dbReference type="InterPro" id="IPR027387">
    <property type="entry name" value="Cytb/b6-like_sf"/>
</dbReference>
<dbReference type="InterPro" id="IPR030689">
    <property type="entry name" value="Cytochrome_b"/>
</dbReference>
<dbReference type="InterPro" id="IPR048260">
    <property type="entry name" value="Cytochrome_b_C_euk/bac"/>
</dbReference>
<dbReference type="InterPro" id="IPR048259">
    <property type="entry name" value="Cytochrome_b_N_euk/bac"/>
</dbReference>
<dbReference type="InterPro" id="IPR016174">
    <property type="entry name" value="Di-haem_cyt_TM"/>
</dbReference>
<dbReference type="PANTHER" id="PTHR19271">
    <property type="entry name" value="CYTOCHROME B"/>
    <property type="match status" value="1"/>
</dbReference>
<dbReference type="PANTHER" id="PTHR19271:SF16">
    <property type="entry name" value="CYTOCHROME B"/>
    <property type="match status" value="1"/>
</dbReference>
<dbReference type="Pfam" id="PF00032">
    <property type="entry name" value="Cytochrom_B_C"/>
    <property type="match status" value="1"/>
</dbReference>
<dbReference type="Pfam" id="PF00033">
    <property type="entry name" value="Cytochrome_B"/>
    <property type="match status" value="1"/>
</dbReference>
<dbReference type="PIRSF" id="PIRSF038885">
    <property type="entry name" value="COB"/>
    <property type="match status" value="1"/>
</dbReference>
<dbReference type="SUPFAM" id="SSF81648">
    <property type="entry name" value="a domain/subunit of cytochrome bc1 complex (Ubiquinol-cytochrome c reductase)"/>
    <property type="match status" value="1"/>
</dbReference>
<dbReference type="SUPFAM" id="SSF81342">
    <property type="entry name" value="Transmembrane di-heme cytochromes"/>
    <property type="match status" value="1"/>
</dbReference>
<dbReference type="PROSITE" id="PS51003">
    <property type="entry name" value="CYTB_CTER"/>
    <property type="match status" value="1"/>
</dbReference>
<dbReference type="PROSITE" id="PS51002">
    <property type="entry name" value="CYTB_NTER"/>
    <property type="match status" value="1"/>
</dbReference>
<geneLocation type="mitochondrion"/>
<keyword id="KW-0249">Electron transport</keyword>
<keyword id="KW-0349">Heme</keyword>
<keyword id="KW-0408">Iron</keyword>
<keyword id="KW-0472">Membrane</keyword>
<keyword id="KW-0479">Metal-binding</keyword>
<keyword id="KW-0496">Mitochondrion</keyword>
<keyword id="KW-0999">Mitochondrion inner membrane</keyword>
<keyword id="KW-0679">Respiratory chain</keyword>
<keyword id="KW-0812">Transmembrane</keyword>
<keyword id="KW-1133">Transmembrane helix</keyword>
<keyword id="KW-0813">Transport</keyword>
<keyword id="KW-0830">Ubiquinone</keyword>
<name>CYB_LUMTE</name>